<gene>
    <name evidence="1" type="primary">rps11</name>
    <name type="ordered locus">LOC_Osp1g00670</name>
    <name type="ORF">Nip102</name>
</gene>
<dbReference type="EMBL" id="X15901">
    <property type="protein sequence ID" value="CAA33980.1"/>
    <property type="molecule type" value="Genomic_DNA"/>
</dbReference>
<dbReference type="EMBL" id="AY522330">
    <property type="protein sequence ID" value="AAS46142.1"/>
    <property type="molecule type" value="Genomic_DNA"/>
</dbReference>
<dbReference type="PIR" id="JQ0259">
    <property type="entry name" value="R3RZ11"/>
</dbReference>
<dbReference type="RefSeq" id="NP_039418.1">
    <property type="nucleotide sequence ID" value="NC_001320.1"/>
</dbReference>
<dbReference type="SMR" id="P0C464"/>
<dbReference type="FunCoup" id="P0C464">
    <property type="interactions" value="502"/>
</dbReference>
<dbReference type="STRING" id="39947.P0C464"/>
<dbReference type="PaxDb" id="39947-P0C464"/>
<dbReference type="EnsemblPlants" id="transcript-rps11">
    <property type="protein sequence ID" value="cds-CAA33980.1"/>
    <property type="gene ID" value="gene-rps11"/>
</dbReference>
<dbReference type="GeneID" id="3131435"/>
<dbReference type="Gramene" id="transcript-rps11">
    <property type="protein sequence ID" value="cds-CAA33980.1"/>
    <property type="gene ID" value="gene-rps11"/>
</dbReference>
<dbReference type="KEGG" id="dosa:rps11"/>
<dbReference type="KEGG" id="osa:3131435"/>
<dbReference type="InParanoid" id="P0C464"/>
<dbReference type="OrthoDB" id="535480at2759"/>
<dbReference type="Proteomes" id="UP000059680">
    <property type="component" value="Chloroplast"/>
</dbReference>
<dbReference type="GO" id="GO:0009507">
    <property type="term" value="C:chloroplast"/>
    <property type="evidence" value="ECO:0007669"/>
    <property type="project" value="UniProtKB-SubCell"/>
</dbReference>
<dbReference type="GO" id="GO:0009536">
    <property type="term" value="C:plastid"/>
    <property type="evidence" value="ECO:0000305"/>
    <property type="project" value="Gramene"/>
</dbReference>
<dbReference type="GO" id="GO:1990904">
    <property type="term" value="C:ribonucleoprotein complex"/>
    <property type="evidence" value="ECO:0007669"/>
    <property type="project" value="UniProtKB-KW"/>
</dbReference>
<dbReference type="GO" id="GO:0005840">
    <property type="term" value="C:ribosome"/>
    <property type="evidence" value="ECO:0007669"/>
    <property type="project" value="UniProtKB-KW"/>
</dbReference>
<dbReference type="GO" id="GO:0019843">
    <property type="term" value="F:rRNA binding"/>
    <property type="evidence" value="ECO:0007669"/>
    <property type="project" value="UniProtKB-UniRule"/>
</dbReference>
<dbReference type="GO" id="GO:0003735">
    <property type="term" value="F:structural constituent of ribosome"/>
    <property type="evidence" value="ECO:0000318"/>
    <property type="project" value="GO_Central"/>
</dbReference>
<dbReference type="GO" id="GO:0006412">
    <property type="term" value="P:translation"/>
    <property type="evidence" value="ECO:0000318"/>
    <property type="project" value="GO_Central"/>
</dbReference>
<dbReference type="FunFam" id="3.30.420.80:FF:000003">
    <property type="entry name" value="30S ribosomal protein S11, chloroplastic"/>
    <property type="match status" value="1"/>
</dbReference>
<dbReference type="Gene3D" id="3.30.420.80">
    <property type="entry name" value="Ribosomal protein S11"/>
    <property type="match status" value="1"/>
</dbReference>
<dbReference type="HAMAP" id="MF_01310">
    <property type="entry name" value="Ribosomal_uS11"/>
    <property type="match status" value="1"/>
</dbReference>
<dbReference type="InterPro" id="IPR001971">
    <property type="entry name" value="Ribosomal_uS11"/>
</dbReference>
<dbReference type="InterPro" id="IPR018102">
    <property type="entry name" value="Ribosomal_uS11_CS"/>
</dbReference>
<dbReference type="InterPro" id="IPR036967">
    <property type="entry name" value="Ribosomal_uS11_sf"/>
</dbReference>
<dbReference type="NCBIfam" id="NF003698">
    <property type="entry name" value="PRK05309.1"/>
    <property type="match status" value="1"/>
</dbReference>
<dbReference type="PANTHER" id="PTHR11759">
    <property type="entry name" value="40S RIBOSOMAL PROTEIN S14/30S RIBOSOMAL PROTEIN S11"/>
    <property type="match status" value="1"/>
</dbReference>
<dbReference type="Pfam" id="PF00411">
    <property type="entry name" value="Ribosomal_S11"/>
    <property type="match status" value="1"/>
</dbReference>
<dbReference type="PIRSF" id="PIRSF002131">
    <property type="entry name" value="Ribosomal_S11"/>
    <property type="match status" value="1"/>
</dbReference>
<dbReference type="SUPFAM" id="SSF53137">
    <property type="entry name" value="Translational machinery components"/>
    <property type="match status" value="1"/>
</dbReference>
<dbReference type="PROSITE" id="PS00054">
    <property type="entry name" value="RIBOSOMAL_S11"/>
    <property type="match status" value="1"/>
</dbReference>
<proteinExistence type="inferred from homology"/>
<keyword id="KW-0150">Chloroplast</keyword>
<keyword id="KW-0934">Plastid</keyword>
<keyword id="KW-1185">Reference proteome</keyword>
<keyword id="KW-0687">Ribonucleoprotein</keyword>
<keyword id="KW-0689">Ribosomal protein</keyword>
<keyword id="KW-0694">RNA-binding</keyword>
<keyword id="KW-0699">rRNA-binding</keyword>
<accession>P0C464</accession>
<accession>P12096</accession>
<accession>Q6QXY9</accession>
<accession>Q6QY53</accession>
<sequence length="143" mass="15624">MTKAIPKIGSRRKVRIGLRRNARFSLRKSARRITKGVIHVQASFNNTIITVTDPQGRVVFWSSAGTCGFKSSRKASPYAGQRTAVDAIRTVGLQRAEVMVKGAGSGRDAALRAIAKSGVRLSCIRDVTPMPHNGCRPPKKRRL</sequence>
<protein>
    <recommendedName>
        <fullName evidence="1">Small ribosomal subunit protein uS11c</fullName>
    </recommendedName>
    <alternativeName>
        <fullName evidence="2">30S ribosomal protein S11, chloroplastic</fullName>
    </alternativeName>
</protein>
<reference key="1">
    <citation type="journal article" date="1989" name="Mol. Gen. Genet.">
        <title>The complete sequence of the rice (Oryza sativa) chloroplast genome: intermolecular recombination between distinct tRNA genes accounts for a major plastid DNA inversion during the evolution of the cereals.</title>
        <authorList>
            <person name="Hiratsuka J."/>
            <person name="Shimada H."/>
            <person name="Whittier R."/>
            <person name="Ishibashi T."/>
            <person name="Sakamoto M."/>
            <person name="Mori M."/>
            <person name="Kondo C."/>
            <person name="Honji Y."/>
            <person name="Sun C.-R."/>
            <person name="Meng B.-Y."/>
            <person name="Li Y.-Q."/>
            <person name="Kanno A."/>
            <person name="Nishizawa Y."/>
            <person name="Hirai A."/>
            <person name="Shinozaki K."/>
            <person name="Sugiura M."/>
        </authorList>
    </citation>
    <scope>NUCLEOTIDE SEQUENCE [LARGE SCALE GENOMIC DNA]</scope>
    <source>
        <strain>cv. Nipponbare</strain>
    </source>
</reference>
<reference key="2">
    <citation type="journal article" date="2004" name="Plant Physiol.">
        <title>A comparison of rice chloroplast genomes.</title>
        <authorList>
            <person name="Tang J."/>
            <person name="Xia H."/>
            <person name="Cao M."/>
            <person name="Zhang X."/>
            <person name="Zeng W."/>
            <person name="Hu S."/>
            <person name="Tong W."/>
            <person name="Wang J."/>
            <person name="Wang J."/>
            <person name="Yu J."/>
            <person name="Yang H."/>
            <person name="Zhu L."/>
        </authorList>
    </citation>
    <scope>NUCLEOTIDE SEQUENCE [LARGE SCALE GENOMIC DNA]</scope>
    <source>
        <strain>cv. Nipponbare</strain>
    </source>
</reference>
<name>RR11_ORYSJ</name>
<geneLocation type="chloroplast"/>
<comment type="subunit">
    <text evidence="1">Part of the 30S ribosomal subunit.</text>
</comment>
<comment type="subcellular location">
    <subcellularLocation>
        <location>Plastid</location>
        <location>Chloroplast</location>
    </subcellularLocation>
</comment>
<comment type="similarity">
    <text evidence="1">Belongs to the universal ribosomal protein uS11 family.</text>
</comment>
<evidence type="ECO:0000255" key="1">
    <source>
        <dbReference type="HAMAP-Rule" id="MF_01310"/>
    </source>
</evidence>
<evidence type="ECO:0000305" key="2"/>
<feature type="chain" id="PRO_0000290061" description="Small ribosomal subunit protein uS11c">
    <location>
        <begin position="1"/>
        <end position="143"/>
    </location>
</feature>
<organism>
    <name type="scientific">Oryza sativa subsp. japonica</name>
    <name type="common">Rice</name>
    <dbReference type="NCBI Taxonomy" id="39947"/>
    <lineage>
        <taxon>Eukaryota</taxon>
        <taxon>Viridiplantae</taxon>
        <taxon>Streptophyta</taxon>
        <taxon>Embryophyta</taxon>
        <taxon>Tracheophyta</taxon>
        <taxon>Spermatophyta</taxon>
        <taxon>Magnoliopsida</taxon>
        <taxon>Liliopsida</taxon>
        <taxon>Poales</taxon>
        <taxon>Poaceae</taxon>
        <taxon>BOP clade</taxon>
        <taxon>Oryzoideae</taxon>
        <taxon>Oryzeae</taxon>
        <taxon>Oryzinae</taxon>
        <taxon>Oryza</taxon>
        <taxon>Oryza sativa</taxon>
    </lineage>
</organism>